<feature type="chain" id="PRO_0000174683" description="Co-chaperonin GroES">
    <location>
        <begin position="1"/>
        <end position="95"/>
    </location>
</feature>
<keyword id="KW-0143">Chaperone</keyword>
<keyword id="KW-0963">Cytoplasm</keyword>
<keyword id="KW-1185">Reference proteome</keyword>
<name>CH10_PSET1</name>
<organism>
    <name type="scientific">Pseudoalteromonas translucida (strain TAC 125)</name>
    <dbReference type="NCBI Taxonomy" id="326442"/>
    <lineage>
        <taxon>Bacteria</taxon>
        <taxon>Pseudomonadati</taxon>
        <taxon>Pseudomonadota</taxon>
        <taxon>Gammaproteobacteria</taxon>
        <taxon>Alteromonadales</taxon>
        <taxon>Pseudoalteromonadaceae</taxon>
        <taxon>Pseudoalteromonas</taxon>
    </lineage>
</organism>
<protein>
    <recommendedName>
        <fullName evidence="1">Co-chaperonin GroES</fullName>
    </recommendedName>
    <alternativeName>
        <fullName evidence="1">10 kDa chaperonin</fullName>
    </alternativeName>
    <alternativeName>
        <fullName evidence="1">Chaperonin-10</fullName>
        <shortName evidence="1">Cpn10</shortName>
    </alternativeName>
</protein>
<gene>
    <name evidence="1" type="primary">groES</name>
    <name evidence="1" type="synonym">groS</name>
    <name type="ordered locus">PSHAa0260</name>
</gene>
<comment type="function">
    <text evidence="1">Together with the chaperonin GroEL, plays an essential role in assisting protein folding. The GroEL-GroES system forms a nano-cage that allows encapsulation of the non-native substrate proteins and provides a physical environment optimized to promote and accelerate protein folding. GroES binds to the apical surface of the GroEL ring, thereby capping the opening of the GroEL channel.</text>
</comment>
<comment type="subunit">
    <text evidence="1">Heptamer of 7 subunits arranged in a ring. Interacts with the chaperonin GroEL.</text>
</comment>
<comment type="subcellular location">
    <subcellularLocation>
        <location evidence="1">Cytoplasm</location>
    </subcellularLocation>
</comment>
<comment type="similarity">
    <text evidence="1">Belongs to the GroES chaperonin family.</text>
</comment>
<dbReference type="EMBL" id="AJ243594">
    <property type="protein sequence ID" value="CAC28359.1"/>
    <property type="molecule type" value="Genomic_DNA"/>
</dbReference>
<dbReference type="EMBL" id="CR954246">
    <property type="protein sequence ID" value="CAI85359.1"/>
    <property type="molecule type" value="Genomic_DNA"/>
</dbReference>
<dbReference type="SMR" id="Q9AKT2"/>
<dbReference type="STRING" id="326442.PSHAa0260"/>
<dbReference type="KEGG" id="pha:PSHAa0260"/>
<dbReference type="eggNOG" id="COG0234">
    <property type="taxonomic scope" value="Bacteria"/>
</dbReference>
<dbReference type="HOGENOM" id="CLU_132825_1_1_6"/>
<dbReference type="BioCyc" id="PHAL326442:PSHA_RS01290-MONOMER"/>
<dbReference type="Proteomes" id="UP000006843">
    <property type="component" value="Chromosome I"/>
</dbReference>
<dbReference type="GO" id="GO:0005737">
    <property type="term" value="C:cytoplasm"/>
    <property type="evidence" value="ECO:0007669"/>
    <property type="project" value="UniProtKB-SubCell"/>
</dbReference>
<dbReference type="GO" id="GO:0005524">
    <property type="term" value="F:ATP binding"/>
    <property type="evidence" value="ECO:0007669"/>
    <property type="project" value="InterPro"/>
</dbReference>
<dbReference type="GO" id="GO:0046872">
    <property type="term" value="F:metal ion binding"/>
    <property type="evidence" value="ECO:0007669"/>
    <property type="project" value="TreeGrafter"/>
</dbReference>
<dbReference type="GO" id="GO:0044183">
    <property type="term" value="F:protein folding chaperone"/>
    <property type="evidence" value="ECO:0007669"/>
    <property type="project" value="InterPro"/>
</dbReference>
<dbReference type="GO" id="GO:0051087">
    <property type="term" value="F:protein-folding chaperone binding"/>
    <property type="evidence" value="ECO:0007669"/>
    <property type="project" value="TreeGrafter"/>
</dbReference>
<dbReference type="GO" id="GO:0051082">
    <property type="term" value="F:unfolded protein binding"/>
    <property type="evidence" value="ECO:0007669"/>
    <property type="project" value="TreeGrafter"/>
</dbReference>
<dbReference type="GO" id="GO:0051085">
    <property type="term" value="P:chaperone cofactor-dependent protein refolding"/>
    <property type="evidence" value="ECO:0007669"/>
    <property type="project" value="TreeGrafter"/>
</dbReference>
<dbReference type="CDD" id="cd00320">
    <property type="entry name" value="cpn10"/>
    <property type="match status" value="1"/>
</dbReference>
<dbReference type="FunFam" id="2.30.33.40:FF:000001">
    <property type="entry name" value="10 kDa chaperonin"/>
    <property type="match status" value="1"/>
</dbReference>
<dbReference type="Gene3D" id="2.30.33.40">
    <property type="entry name" value="GroES chaperonin"/>
    <property type="match status" value="1"/>
</dbReference>
<dbReference type="HAMAP" id="MF_00580">
    <property type="entry name" value="CH10"/>
    <property type="match status" value="1"/>
</dbReference>
<dbReference type="InterPro" id="IPR020818">
    <property type="entry name" value="Chaperonin_GroES"/>
</dbReference>
<dbReference type="InterPro" id="IPR037124">
    <property type="entry name" value="Chaperonin_GroES_sf"/>
</dbReference>
<dbReference type="InterPro" id="IPR018369">
    <property type="entry name" value="Chaprnonin_Cpn10_CS"/>
</dbReference>
<dbReference type="InterPro" id="IPR011032">
    <property type="entry name" value="GroES-like_sf"/>
</dbReference>
<dbReference type="NCBIfam" id="NF001526">
    <property type="entry name" value="PRK00364.1-1"/>
    <property type="match status" value="1"/>
</dbReference>
<dbReference type="NCBIfam" id="NF001527">
    <property type="entry name" value="PRK00364.1-2"/>
    <property type="match status" value="1"/>
</dbReference>
<dbReference type="NCBIfam" id="NF001531">
    <property type="entry name" value="PRK00364.2-2"/>
    <property type="match status" value="1"/>
</dbReference>
<dbReference type="NCBIfam" id="NF001533">
    <property type="entry name" value="PRK00364.2-4"/>
    <property type="match status" value="1"/>
</dbReference>
<dbReference type="PANTHER" id="PTHR10772">
    <property type="entry name" value="10 KDA HEAT SHOCK PROTEIN"/>
    <property type="match status" value="1"/>
</dbReference>
<dbReference type="PANTHER" id="PTHR10772:SF58">
    <property type="entry name" value="CO-CHAPERONIN GROES"/>
    <property type="match status" value="1"/>
</dbReference>
<dbReference type="Pfam" id="PF00166">
    <property type="entry name" value="Cpn10"/>
    <property type="match status" value="1"/>
</dbReference>
<dbReference type="PRINTS" id="PR00297">
    <property type="entry name" value="CHAPERONIN10"/>
</dbReference>
<dbReference type="SMART" id="SM00883">
    <property type="entry name" value="Cpn10"/>
    <property type="match status" value="1"/>
</dbReference>
<dbReference type="SUPFAM" id="SSF50129">
    <property type="entry name" value="GroES-like"/>
    <property type="match status" value="1"/>
</dbReference>
<dbReference type="PROSITE" id="PS00681">
    <property type="entry name" value="CHAPERONINS_CPN10"/>
    <property type="match status" value="1"/>
</dbReference>
<sequence>MNIRPLHDRVIVKRLEEETKSAGGIVLTGSAAEKSTRGEVVAVGNGRILESGDVRALEVKAGDTVLFGSYVEKVEKIEGQEYLIMREDNILGIVG</sequence>
<accession>Q9AKT2</accession>
<accession>Q3IDT6</accession>
<evidence type="ECO:0000255" key="1">
    <source>
        <dbReference type="HAMAP-Rule" id="MF_00580"/>
    </source>
</evidence>
<proteinExistence type="inferred from homology"/>
<reference key="1">
    <citation type="submission" date="1999-07" db="EMBL/GenBank/DDBJ databases">
        <title>A GroEL-like protein from the psychrotrophic bacterium Pseudoalteromonas haloplanktis TAC125.</title>
        <authorList>
            <person name="Tosco A."/>
            <person name="Birolo L."/>
            <person name="Scaloni A."/>
            <person name="Sannia G."/>
            <person name="Marino G."/>
        </authorList>
    </citation>
    <scope>NUCLEOTIDE SEQUENCE [GENOMIC DNA]</scope>
</reference>
<reference key="2">
    <citation type="journal article" date="2005" name="Genome Res.">
        <title>Coping with cold: the genome of the versatile marine Antarctica bacterium Pseudoalteromonas haloplanktis TAC125.</title>
        <authorList>
            <person name="Medigue C."/>
            <person name="Krin E."/>
            <person name="Pascal G."/>
            <person name="Barbe V."/>
            <person name="Bernsel A."/>
            <person name="Bertin P.N."/>
            <person name="Cheung F."/>
            <person name="Cruveiller S."/>
            <person name="D'Amico S."/>
            <person name="Duilio A."/>
            <person name="Fang G."/>
            <person name="Feller G."/>
            <person name="Ho C."/>
            <person name="Mangenot S."/>
            <person name="Marino G."/>
            <person name="Nilsson J."/>
            <person name="Parrilli E."/>
            <person name="Rocha E.P.C."/>
            <person name="Rouy Z."/>
            <person name="Sekowska A."/>
            <person name="Tutino M.L."/>
            <person name="Vallenet D."/>
            <person name="von Heijne G."/>
            <person name="Danchin A."/>
        </authorList>
    </citation>
    <scope>NUCLEOTIDE SEQUENCE [LARGE SCALE GENOMIC DNA]</scope>
    <source>
        <strain>TAC 125</strain>
    </source>
</reference>